<sequence>MIFIDACFKKPTPYTPIWMMRQAGRYLPEYMEVRKQAGDFLSLCKDYKKASEVSLQPIDILDVDAAIIFSDILVVPLEMGMNLRFEKGEGPVFDNPISTLEDLEKLDDQNAHKKLNYVYDALKLTREKLSQNKALIGFCGSPWTIATYMIEGSGSKNYAKCKKMLYQNPELLHKILNKLTQVLKLYLEEQIKAGANAIQIFDSWASALEYDKFFEFSFNYMLEISNFIKSKYPNIPVILFPKGISGYLDRIDGNFDVFGVDWSTPLDLARDKLSHKYTLQGNMEPCRLYDKNAIKEGVEKILKTMQNKAHIFNLGHGILPDIPVENAKYFIKLVQESSAK</sequence>
<comment type="function">
    <text evidence="1">Catalyzes the decarboxylation of four acetate groups of uroporphyrinogen-III to yield coproporphyrinogen-III.</text>
</comment>
<comment type="catalytic activity">
    <reaction evidence="1">
        <text>uroporphyrinogen III + 4 H(+) = coproporphyrinogen III + 4 CO2</text>
        <dbReference type="Rhea" id="RHEA:19865"/>
        <dbReference type="ChEBI" id="CHEBI:15378"/>
        <dbReference type="ChEBI" id="CHEBI:16526"/>
        <dbReference type="ChEBI" id="CHEBI:57308"/>
        <dbReference type="ChEBI" id="CHEBI:57309"/>
        <dbReference type="EC" id="4.1.1.37"/>
    </reaction>
</comment>
<comment type="pathway">
    <text evidence="1">Porphyrin-containing compound metabolism; protoporphyrin-IX biosynthesis; coproporphyrinogen-III from 5-aminolevulinate: step 4/4.</text>
</comment>
<comment type="subunit">
    <text evidence="1">Homodimer.</text>
</comment>
<comment type="subcellular location">
    <subcellularLocation>
        <location evidence="1">Cytoplasm</location>
    </subcellularLocation>
</comment>
<comment type="similarity">
    <text evidence="1">Belongs to the uroporphyrinogen decarboxylase family.</text>
</comment>
<accession>A8FMU8</accession>
<gene>
    <name evidence="1" type="primary">hemE</name>
    <name type="ordered locus">C8J_1186</name>
</gene>
<reference key="1">
    <citation type="journal article" date="2007" name="J. Bacteriol.">
        <title>The complete genome sequence of Campylobacter jejuni strain 81116 (NCTC11828).</title>
        <authorList>
            <person name="Pearson B.M."/>
            <person name="Gaskin D.J.H."/>
            <person name="Segers R.P.A.M."/>
            <person name="Wells J.M."/>
            <person name="Nuijten P.J.M."/>
            <person name="van Vliet A.H.M."/>
        </authorList>
    </citation>
    <scope>NUCLEOTIDE SEQUENCE [LARGE SCALE GENOMIC DNA]</scope>
    <source>
        <strain>81116 / NCTC 11828</strain>
    </source>
</reference>
<organism>
    <name type="scientific">Campylobacter jejuni subsp. jejuni serotype O:6 (strain 81116 / NCTC 11828)</name>
    <dbReference type="NCBI Taxonomy" id="407148"/>
    <lineage>
        <taxon>Bacteria</taxon>
        <taxon>Pseudomonadati</taxon>
        <taxon>Campylobacterota</taxon>
        <taxon>Epsilonproteobacteria</taxon>
        <taxon>Campylobacterales</taxon>
        <taxon>Campylobacteraceae</taxon>
        <taxon>Campylobacter</taxon>
    </lineage>
</organism>
<protein>
    <recommendedName>
        <fullName evidence="1">Uroporphyrinogen decarboxylase</fullName>
        <shortName evidence="1">UPD</shortName>
        <shortName evidence="1">URO-D</shortName>
        <ecNumber evidence="1">4.1.1.37</ecNumber>
    </recommendedName>
</protein>
<keyword id="KW-0963">Cytoplasm</keyword>
<keyword id="KW-0210">Decarboxylase</keyword>
<keyword id="KW-0456">Lyase</keyword>
<keyword id="KW-0627">Porphyrin biosynthesis</keyword>
<dbReference type="EC" id="4.1.1.37" evidence="1"/>
<dbReference type="EMBL" id="CP000814">
    <property type="protein sequence ID" value="ABV52785.1"/>
    <property type="molecule type" value="Genomic_DNA"/>
</dbReference>
<dbReference type="RefSeq" id="WP_002866238.1">
    <property type="nucleotide sequence ID" value="NC_009839.1"/>
</dbReference>
<dbReference type="SMR" id="A8FMU8"/>
<dbReference type="KEGG" id="cju:C8J_1186"/>
<dbReference type="HOGENOM" id="CLU_040933_0_0_7"/>
<dbReference type="UniPathway" id="UPA00251">
    <property type="reaction ID" value="UER00321"/>
</dbReference>
<dbReference type="GO" id="GO:0005829">
    <property type="term" value="C:cytosol"/>
    <property type="evidence" value="ECO:0007669"/>
    <property type="project" value="TreeGrafter"/>
</dbReference>
<dbReference type="GO" id="GO:0004853">
    <property type="term" value="F:uroporphyrinogen decarboxylase activity"/>
    <property type="evidence" value="ECO:0007669"/>
    <property type="project" value="UniProtKB-UniRule"/>
</dbReference>
<dbReference type="GO" id="GO:0019353">
    <property type="term" value="P:protoporphyrinogen IX biosynthetic process from glutamate"/>
    <property type="evidence" value="ECO:0007669"/>
    <property type="project" value="TreeGrafter"/>
</dbReference>
<dbReference type="CDD" id="cd00717">
    <property type="entry name" value="URO-D"/>
    <property type="match status" value="1"/>
</dbReference>
<dbReference type="FunFam" id="3.20.20.210:FF:000007">
    <property type="entry name" value="Uroporphyrinogen decarboxylase"/>
    <property type="match status" value="1"/>
</dbReference>
<dbReference type="Gene3D" id="3.20.20.210">
    <property type="match status" value="1"/>
</dbReference>
<dbReference type="HAMAP" id="MF_00218">
    <property type="entry name" value="URO_D"/>
    <property type="match status" value="1"/>
</dbReference>
<dbReference type="InterPro" id="IPR038071">
    <property type="entry name" value="UROD/MetE-like_sf"/>
</dbReference>
<dbReference type="InterPro" id="IPR006361">
    <property type="entry name" value="Uroporphyrinogen_deCO2ase_HemE"/>
</dbReference>
<dbReference type="InterPro" id="IPR000257">
    <property type="entry name" value="Uroporphyrinogen_deCOase"/>
</dbReference>
<dbReference type="NCBIfam" id="TIGR01464">
    <property type="entry name" value="hemE"/>
    <property type="match status" value="1"/>
</dbReference>
<dbReference type="PANTHER" id="PTHR21091">
    <property type="entry name" value="METHYLTETRAHYDROFOLATE:HOMOCYSTEINE METHYLTRANSFERASE RELATED"/>
    <property type="match status" value="1"/>
</dbReference>
<dbReference type="PANTHER" id="PTHR21091:SF169">
    <property type="entry name" value="UROPORPHYRINOGEN DECARBOXYLASE"/>
    <property type="match status" value="1"/>
</dbReference>
<dbReference type="Pfam" id="PF01208">
    <property type="entry name" value="URO-D"/>
    <property type="match status" value="1"/>
</dbReference>
<dbReference type="SUPFAM" id="SSF51726">
    <property type="entry name" value="UROD/MetE-like"/>
    <property type="match status" value="1"/>
</dbReference>
<dbReference type="PROSITE" id="PS00906">
    <property type="entry name" value="UROD_1"/>
    <property type="match status" value="1"/>
</dbReference>
<dbReference type="PROSITE" id="PS00907">
    <property type="entry name" value="UROD_2"/>
    <property type="match status" value="1"/>
</dbReference>
<name>DCUP_CAMJ8</name>
<evidence type="ECO:0000255" key="1">
    <source>
        <dbReference type="HAMAP-Rule" id="MF_00218"/>
    </source>
</evidence>
<proteinExistence type="inferred from homology"/>
<feature type="chain" id="PRO_1000071752" description="Uroporphyrinogen decarboxylase">
    <location>
        <begin position="1"/>
        <end position="340"/>
    </location>
</feature>
<feature type="binding site" evidence="1">
    <location>
        <begin position="21"/>
        <end position="25"/>
    </location>
    <ligand>
        <name>substrate</name>
    </ligand>
</feature>
<feature type="binding site" evidence="1">
    <location>
        <position position="71"/>
    </location>
    <ligand>
        <name>substrate</name>
    </ligand>
</feature>
<feature type="binding site" evidence="1">
    <location>
        <position position="148"/>
    </location>
    <ligand>
        <name>substrate</name>
    </ligand>
</feature>
<feature type="binding site" evidence="1">
    <location>
        <position position="203"/>
    </location>
    <ligand>
        <name>substrate</name>
    </ligand>
</feature>
<feature type="binding site" evidence="1">
    <location>
        <position position="316"/>
    </location>
    <ligand>
        <name>substrate</name>
    </ligand>
</feature>
<feature type="site" description="Transition state stabilizer" evidence="1">
    <location>
        <position position="71"/>
    </location>
</feature>